<evidence type="ECO:0000255" key="1">
    <source>
        <dbReference type="PROSITE-ProRule" id="PRU00159"/>
    </source>
</evidence>
<evidence type="ECO:0000255" key="2">
    <source>
        <dbReference type="PROSITE-ProRule" id="PRU10027"/>
    </source>
</evidence>
<evidence type="ECO:0000256" key="3">
    <source>
        <dbReference type="SAM" id="MobiDB-lite"/>
    </source>
</evidence>
<evidence type="ECO:0000269" key="4">
    <source>
    </source>
</evidence>
<evidence type="ECO:0000269" key="5">
    <source>
    </source>
</evidence>
<evidence type="ECO:0000269" key="6">
    <source>
    </source>
</evidence>
<evidence type="ECO:0000269" key="7">
    <source>
    </source>
</evidence>
<evidence type="ECO:0000269" key="8">
    <source>
    </source>
</evidence>
<evidence type="ECO:0000305" key="9"/>
<evidence type="ECO:0007744" key="10">
    <source>
    </source>
</evidence>
<evidence type="ECO:0007744" key="11">
    <source>
    </source>
</evidence>
<evidence type="ECO:0007744" key="12">
    <source>
    </source>
</evidence>
<evidence type="ECO:0007744" key="13">
    <source>
    </source>
</evidence>
<name>PRR1_YEAST</name>
<feature type="chain" id="PRO_0000086149" description="Serine/threonine-protein kinase PRR1">
    <location>
        <begin position="1"/>
        <end position="518"/>
    </location>
</feature>
<feature type="domain" description="Protein kinase" evidence="1">
    <location>
        <begin position="192"/>
        <end position="508"/>
    </location>
</feature>
<feature type="region of interest" description="Disordered" evidence="3">
    <location>
        <begin position="1"/>
        <end position="59"/>
    </location>
</feature>
<feature type="compositionally biased region" description="Polar residues" evidence="3">
    <location>
        <begin position="1"/>
        <end position="12"/>
    </location>
</feature>
<feature type="compositionally biased region" description="Basic and acidic residues" evidence="3">
    <location>
        <begin position="16"/>
        <end position="45"/>
    </location>
</feature>
<feature type="compositionally biased region" description="Polar residues" evidence="3">
    <location>
        <begin position="47"/>
        <end position="59"/>
    </location>
</feature>
<feature type="active site" description="Proton acceptor" evidence="1 2">
    <location>
        <position position="354"/>
    </location>
</feature>
<feature type="binding site" evidence="1">
    <location>
        <begin position="198"/>
        <end position="206"/>
    </location>
    <ligand>
        <name>ATP</name>
        <dbReference type="ChEBI" id="CHEBI:30616"/>
    </ligand>
</feature>
<feature type="binding site" evidence="1">
    <location>
        <position position="225"/>
    </location>
    <ligand>
        <name>ATP</name>
        <dbReference type="ChEBI" id="CHEBI:30616"/>
    </ligand>
</feature>
<feature type="modified residue" description="N-acetylmethionine" evidence="13">
    <location>
        <position position="1"/>
    </location>
</feature>
<feature type="modified residue" description="Phosphoserine" evidence="10 11 12">
    <location>
        <position position="132"/>
    </location>
</feature>
<sequence>MDEYSSIYSQPKTPRLKQEGFPDSIGDQHEKALIDENGEEDKKMASTEGTTGDSRSTPLTVSIPTFENVQALPTPMTYTPLSPGNLSMSPIDQSSLNIPKRRSHARLLDDMLSVTQPNQRVVSELIAPANLSPQRVVSLPTVTEEALVNDSVDSDNYTKEPYFPESSSSTEKCDDDIFQGFLLDHWDRPLLWKKVRPIGSGNFSTVLLYELMDQSNPKLKQVAVKRLKYPEELSNVEQINTSLRYKETLSRLENSLTRELQVLKSLNHPCIVKLLGINNPIFVTSKKPLCDLIIKTPRALPPCDMIMSYCPAGDLLAAVMARNGRLEAWLIQRIFTEVVLAVKYLHENSIIHRDLKLENILLKYSFDDINSFRDSPIYCKQNFIELADFGLCKKIENNEMCTARCGSEDYVSPEILMGVPYDGHLSDTWALGVILYSLFEDRLPFDPPPNASARQRSRATSHRIARFDWRWYRLSDYKTNVGKQIVENTLTRKNQRWSINEIYESPFVKTIADTLSFS</sequence>
<accession>P28708</accession>
<accession>D6VXH3</accession>
<comment type="function">
    <text evidence="4 5">Protein kinase that functions as a regulator in the pheromone-induced mating pathway downstream of mitogen-activated protein kinase (MAPK) FUS3. Diminishes transcriptional induction of genes in response to pheromone signaling.</text>
</comment>
<comment type="catalytic activity">
    <reaction evidence="8">
        <text>L-seryl-[protein] + ATP = O-phospho-L-seryl-[protein] + ADP + H(+)</text>
        <dbReference type="Rhea" id="RHEA:17989"/>
        <dbReference type="Rhea" id="RHEA-COMP:9863"/>
        <dbReference type="Rhea" id="RHEA-COMP:11604"/>
        <dbReference type="ChEBI" id="CHEBI:15378"/>
        <dbReference type="ChEBI" id="CHEBI:29999"/>
        <dbReference type="ChEBI" id="CHEBI:30616"/>
        <dbReference type="ChEBI" id="CHEBI:83421"/>
        <dbReference type="ChEBI" id="CHEBI:456216"/>
        <dbReference type="EC" id="2.7.11.1"/>
    </reaction>
</comment>
<comment type="catalytic activity">
    <reaction evidence="8">
        <text>L-threonyl-[protein] + ATP = O-phospho-L-threonyl-[protein] + ADP + H(+)</text>
        <dbReference type="Rhea" id="RHEA:46608"/>
        <dbReference type="Rhea" id="RHEA-COMP:11060"/>
        <dbReference type="Rhea" id="RHEA-COMP:11605"/>
        <dbReference type="ChEBI" id="CHEBI:15378"/>
        <dbReference type="ChEBI" id="CHEBI:30013"/>
        <dbReference type="ChEBI" id="CHEBI:30616"/>
        <dbReference type="ChEBI" id="CHEBI:61977"/>
        <dbReference type="ChEBI" id="CHEBI:456216"/>
        <dbReference type="EC" id="2.7.11.1"/>
    </reaction>
</comment>
<comment type="interaction">
    <interactant intactId="EBI-9782">
        <id>P28708</id>
    </interactant>
    <interactant intactId="EBI-11541">
        <id>P07215</id>
        <label>CUP1-2</label>
    </interactant>
    <organismsDiffer>false</organismsDiffer>
    <experiments>2</experiments>
</comment>
<comment type="subcellular location">
    <subcellularLocation>
        <location evidence="6">Cytoplasm</location>
    </subcellularLocation>
</comment>
<comment type="miscellaneous">
    <text evidence="7">Present with 1510 molecules/cell in log phase SD medium.</text>
</comment>
<comment type="similarity">
    <text evidence="9">Belongs to the protein kinase superfamily. CAMK Ser/Thr protein kinase family. NIM1 subfamily.</text>
</comment>
<proteinExistence type="evidence at protein level"/>
<organism>
    <name type="scientific">Saccharomyces cerevisiae (strain ATCC 204508 / S288c)</name>
    <name type="common">Baker's yeast</name>
    <dbReference type="NCBI Taxonomy" id="559292"/>
    <lineage>
        <taxon>Eukaryota</taxon>
        <taxon>Fungi</taxon>
        <taxon>Dikarya</taxon>
        <taxon>Ascomycota</taxon>
        <taxon>Saccharomycotina</taxon>
        <taxon>Saccharomycetes</taxon>
        <taxon>Saccharomycetales</taxon>
        <taxon>Saccharomycetaceae</taxon>
        <taxon>Saccharomyces</taxon>
    </lineage>
</organism>
<dbReference type="EC" id="2.7.11.1"/>
<dbReference type="EMBL" id="S93804">
    <property type="protein sequence ID" value="AAB21999.1"/>
    <property type="molecule type" value="Genomic_DNA"/>
</dbReference>
<dbReference type="EMBL" id="Z28115">
    <property type="protein sequence ID" value="CAA81955.1"/>
    <property type="molecule type" value="Genomic_DNA"/>
</dbReference>
<dbReference type="EMBL" id="BK006944">
    <property type="protein sequence ID" value="DAA09043.1"/>
    <property type="molecule type" value="Genomic_DNA"/>
</dbReference>
<dbReference type="PIR" id="S27381">
    <property type="entry name" value="S27381"/>
</dbReference>
<dbReference type="RefSeq" id="NP_012806.1">
    <property type="nucleotide sequence ID" value="NM_001179682.1"/>
</dbReference>
<dbReference type="SMR" id="P28708"/>
<dbReference type="BioGRID" id="34019">
    <property type="interactions" value="195"/>
</dbReference>
<dbReference type="DIP" id="DIP-1919N"/>
<dbReference type="FunCoup" id="P28708">
    <property type="interactions" value="251"/>
</dbReference>
<dbReference type="IntAct" id="P28708">
    <property type="interactions" value="27"/>
</dbReference>
<dbReference type="MINT" id="P28708"/>
<dbReference type="STRING" id="4932.YKL116C"/>
<dbReference type="iPTMnet" id="P28708"/>
<dbReference type="PaxDb" id="4932-YKL116C"/>
<dbReference type="PeptideAtlas" id="P28708"/>
<dbReference type="EnsemblFungi" id="YKL116C_mRNA">
    <property type="protein sequence ID" value="YKL116C"/>
    <property type="gene ID" value="YKL116C"/>
</dbReference>
<dbReference type="GeneID" id="853744"/>
<dbReference type="KEGG" id="sce:YKL116C"/>
<dbReference type="AGR" id="SGD:S000001599"/>
<dbReference type="SGD" id="S000001599">
    <property type="gene designation" value="PRR1"/>
</dbReference>
<dbReference type="VEuPathDB" id="FungiDB:YKL116C"/>
<dbReference type="eggNOG" id="KOG0586">
    <property type="taxonomic scope" value="Eukaryota"/>
</dbReference>
<dbReference type="HOGENOM" id="CLU_032736_0_0_1"/>
<dbReference type="InParanoid" id="P28708"/>
<dbReference type="OMA" id="PCDMIMS"/>
<dbReference type="OrthoDB" id="410920at2759"/>
<dbReference type="BioCyc" id="YEAST:G3O-31900-MONOMER"/>
<dbReference type="BioGRID-ORCS" id="853744">
    <property type="hits" value="0 hits in 13 CRISPR screens"/>
</dbReference>
<dbReference type="PRO" id="PR:P28708"/>
<dbReference type="Proteomes" id="UP000002311">
    <property type="component" value="Chromosome XI"/>
</dbReference>
<dbReference type="RNAct" id="P28708">
    <property type="molecule type" value="protein"/>
</dbReference>
<dbReference type="GO" id="GO:0005938">
    <property type="term" value="C:cell cortex"/>
    <property type="evidence" value="ECO:0000318"/>
    <property type="project" value="GO_Central"/>
</dbReference>
<dbReference type="GO" id="GO:0005737">
    <property type="term" value="C:cytoplasm"/>
    <property type="evidence" value="ECO:0007005"/>
    <property type="project" value="SGD"/>
</dbReference>
<dbReference type="GO" id="GO:0005524">
    <property type="term" value="F:ATP binding"/>
    <property type="evidence" value="ECO:0007669"/>
    <property type="project" value="UniProtKB-KW"/>
</dbReference>
<dbReference type="GO" id="GO:0004672">
    <property type="term" value="F:protein kinase activity"/>
    <property type="evidence" value="ECO:0007005"/>
    <property type="project" value="SGD"/>
</dbReference>
<dbReference type="GO" id="GO:0106310">
    <property type="term" value="F:protein serine kinase activity"/>
    <property type="evidence" value="ECO:0007669"/>
    <property type="project" value="RHEA"/>
</dbReference>
<dbReference type="GO" id="GO:0004674">
    <property type="term" value="F:protein serine/threonine kinase activity"/>
    <property type="evidence" value="ECO:0000318"/>
    <property type="project" value="GO_Central"/>
</dbReference>
<dbReference type="GO" id="GO:0031138">
    <property type="term" value="P:negative regulation of conjugation with cellular fusion"/>
    <property type="evidence" value="ECO:0000315"/>
    <property type="project" value="SGD"/>
</dbReference>
<dbReference type="GO" id="GO:0000122">
    <property type="term" value="P:negative regulation of transcription by RNA polymerase II"/>
    <property type="evidence" value="ECO:0000315"/>
    <property type="project" value="SGD"/>
</dbReference>
<dbReference type="GO" id="GO:0019236">
    <property type="term" value="P:response to pheromone"/>
    <property type="evidence" value="ECO:0007669"/>
    <property type="project" value="UniProtKB-KW"/>
</dbReference>
<dbReference type="FunFam" id="1.10.510.10:FF:000640">
    <property type="entry name" value="Serine/threonine-protein kinase PRR1"/>
    <property type="match status" value="1"/>
</dbReference>
<dbReference type="Gene3D" id="1.10.510.10">
    <property type="entry name" value="Transferase(Phosphotransferase) domain 1"/>
    <property type="match status" value="1"/>
</dbReference>
<dbReference type="InterPro" id="IPR011009">
    <property type="entry name" value="Kinase-like_dom_sf"/>
</dbReference>
<dbReference type="InterPro" id="IPR000719">
    <property type="entry name" value="Prot_kinase_dom"/>
</dbReference>
<dbReference type="InterPro" id="IPR017441">
    <property type="entry name" value="Protein_kinase_ATP_BS"/>
</dbReference>
<dbReference type="InterPro" id="IPR016240">
    <property type="entry name" value="Ser/Thr_kin_YKL116c_prd"/>
</dbReference>
<dbReference type="InterPro" id="IPR008271">
    <property type="entry name" value="Ser/Thr_kinase_AS"/>
</dbReference>
<dbReference type="PANTHER" id="PTHR24346">
    <property type="entry name" value="MAP/MICROTUBULE AFFINITY-REGULATING KINASE"/>
    <property type="match status" value="1"/>
</dbReference>
<dbReference type="PANTHER" id="PTHR24346:SF42">
    <property type="entry name" value="SERINE_THREONINE-PROTEIN KINASE SIK3"/>
    <property type="match status" value="1"/>
</dbReference>
<dbReference type="Pfam" id="PF00069">
    <property type="entry name" value="Pkinase"/>
    <property type="match status" value="1"/>
</dbReference>
<dbReference type="PIRSF" id="PIRSF000609">
    <property type="entry name" value="Ser/Thr_PK_YKL116c_prd"/>
    <property type="match status" value="1"/>
</dbReference>
<dbReference type="SMART" id="SM00220">
    <property type="entry name" value="S_TKc"/>
    <property type="match status" value="1"/>
</dbReference>
<dbReference type="SUPFAM" id="SSF56112">
    <property type="entry name" value="Protein kinase-like (PK-like)"/>
    <property type="match status" value="1"/>
</dbReference>
<dbReference type="PROSITE" id="PS00107">
    <property type="entry name" value="PROTEIN_KINASE_ATP"/>
    <property type="match status" value="1"/>
</dbReference>
<dbReference type="PROSITE" id="PS50011">
    <property type="entry name" value="PROTEIN_KINASE_DOM"/>
    <property type="match status" value="1"/>
</dbReference>
<dbReference type="PROSITE" id="PS00108">
    <property type="entry name" value="PROTEIN_KINASE_ST"/>
    <property type="match status" value="1"/>
</dbReference>
<gene>
    <name type="primary">PRR1</name>
    <name type="ordered locus">YKL116C</name>
    <name type="ORF">YKL516</name>
</gene>
<protein>
    <recommendedName>
        <fullName>Serine/threonine-protein kinase PRR1</fullName>
        <ecNumber>2.7.11.1</ecNumber>
    </recommendedName>
    <alternativeName>
        <fullName>Pheromone response regulator 1</fullName>
    </alternativeName>
</protein>
<keyword id="KW-0007">Acetylation</keyword>
<keyword id="KW-0067">ATP-binding</keyword>
<keyword id="KW-0963">Cytoplasm</keyword>
<keyword id="KW-0418">Kinase</keyword>
<keyword id="KW-0547">Nucleotide-binding</keyword>
<keyword id="KW-0589">Pheromone response</keyword>
<keyword id="KW-0597">Phosphoprotein</keyword>
<keyword id="KW-1185">Reference proteome</keyword>
<keyword id="KW-0723">Serine/threonine-protein kinase</keyword>
<keyword id="KW-0808">Transferase</keyword>
<reference key="1">
    <citation type="journal article" date="1992" name="Yeast">
        <title>Sequence of a 10.7 kb segment of yeast chromosome XI identifies the APN1 and the BAF1 loci and reveals one tRNA gene and several new open reading frames including homologs to RAD2 and kinases.</title>
        <authorList>
            <person name="Jacquier A."/>
            <person name="Legrain P."/>
            <person name="Dujon B."/>
        </authorList>
    </citation>
    <scope>NUCLEOTIDE SEQUENCE [GENOMIC DNA]</scope>
</reference>
<reference key="2">
    <citation type="journal article" date="1994" name="Nature">
        <title>Complete DNA sequence of yeast chromosome XI.</title>
        <authorList>
            <person name="Dujon B."/>
            <person name="Alexandraki D."/>
            <person name="Andre B."/>
            <person name="Ansorge W."/>
            <person name="Baladron V."/>
            <person name="Ballesta J.P.G."/>
            <person name="Banrevi A."/>
            <person name="Bolle P.-A."/>
            <person name="Bolotin-Fukuhara M."/>
            <person name="Bossier P."/>
            <person name="Bou G."/>
            <person name="Boyer J."/>
            <person name="Buitrago M.J."/>
            <person name="Cheret G."/>
            <person name="Colleaux L."/>
            <person name="Daignan-Fornier B."/>
            <person name="del Rey F."/>
            <person name="Dion C."/>
            <person name="Domdey H."/>
            <person name="Duesterhoeft A."/>
            <person name="Duesterhus S."/>
            <person name="Entian K.-D."/>
            <person name="Erfle H."/>
            <person name="Esteban P.F."/>
            <person name="Feldmann H."/>
            <person name="Fernandes L."/>
            <person name="Fobo G.M."/>
            <person name="Fritz C."/>
            <person name="Fukuhara H."/>
            <person name="Gabel C."/>
            <person name="Gaillon L."/>
            <person name="Garcia-Cantalejo J.M."/>
            <person name="Garcia-Ramirez J.J."/>
            <person name="Gent M.E."/>
            <person name="Ghazvini M."/>
            <person name="Goffeau A."/>
            <person name="Gonzalez A."/>
            <person name="Grothues D."/>
            <person name="Guerreiro P."/>
            <person name="Hegemann J.H."/>
            <person name="Hewitt N."/>
            <person name="Hilger F."/>
            <person name="Hollenberg C.P."/>
            <person name="Horaitis O."/>
            <person name="Indge K.J."/>
            <person name="Jacquier A."/>
            <person name="James C.M."/>
            <person name="Jauniaux J.-C."/>
            <person name="Jimenez A."/>
            <person name="Keuchel H."/>
            <person name="Kirchrath L."/>
            <person name="Kleine K."/>
            <person name="Koetter P."/>
            <person name="Legrain P."/>
            <person name="Liebl S."/>
            <person name="Louis E.J."/>
            <person name="Maia e Silva A."/>
            <person name="Marck C."/>
            <person name="Monnier A.-L."/>
            <person name="Moestl D."/>
            <person name="Mueller S."/>
            <person name="Obermaier B."/>
            <person name="Oliver S.G."/>
            <person name="Pallier C."/>
            <person name="Pascolo S."/>
            <person name="Pfeiffer F."/>
            <person name="Philippsen P."/>
            <person name="Planta R.J."/>
            <person name="Pohl F.M."/>
            <person name="Pohl T.M."/>
            <person name="Poehlmann R."/>
            <person name="Portetelle D."/>
            <person name="Purnelle B."/>
            <person name="Puzos V."/>
            <person name="Ramezani Rad M."/>
            <person name="Rasmussen S.W."/>
            <person name="Remacha M.A."/>
            <person name="Revuelta J.L."/>
            <person name="Richard G.-F."/>
            <person name="Rieger M."/>
            <person name="Rodrigues-Pousada C."/>
            <person name="Rose M."/>
            <person name="Rupp T."/>
            <person name="Santos M.A."/>
            <person name="Schwager C."/>
            <person name="Sensen C."/>
            <person name="Skala J."/>
            <person name="Soares H."/>
            <person name="Sor F."/>
            <person name="Stegemann J."/>
            <person name="Tettelin H."/>
            <person name="Thierry A."/>
            <person name="Tzermia M."/>
            <person name="Urrestarazu L.A."/>
            <person name="van Dyck L."/>
            <person name="van Vliet-Reedijk J.C."/>
            <person name="Valens M."/>
            <person name="Vandenbol M."/>
            <person name="Vilela C."/>
            <person name="Vissers S."/>
            <person name="von Wettstein D."/>
            <person name="Voss H."/>
            <person name="Wiemann S."/>
            <person name="Xu G."/>
            <person name="Zimmermann J."/>
            <person name="Haasemann M."/>
            <person name="Becker I."/>
            <person name="Mewes H.-W."/>
        </authorList>
    </citation>
    <scope>NUCLEOTIDE SEQUENCE [LARGE SCALE GENOMIC DNA]</scope>
    <source>
        <strain>ATCC 204508 / S288c</strain>
    </source>
</reference>
<reference key="3">
    <citation type="journal article" date="2014" name="G3 (Bethesda)">
        <title>The reference genome sequence of Saccharomyces cerevisiae: Then and now.</title>
        <authorList>
            <person name="Engel S.R."/>
            <person name="Dietrich F.S."/>
            <person name="Fisk D.G."/>
            <person name="Binkley G."/>
            <person name="Balakrishnan R."/>
            <person name="Costanzo M.C."/>
            <person name="Dwight S.S."/>
            <person name="Hitz B.C."/>
            <person name="Karra K."/>
            <person name="Nash R.S."/>
            <person name="Weng S."/>
            <person name="Wong E.D."/>
            <person name="Lloyd P."/>
            <person name="Skrzypek M.S."/>
            <person name="Miyasato S.R."/>
            <person name="Simison M."/>
            <person name="Cherry J.M."/>
        </authorList>
    </citation>
    <scope>GENOME REANNOTATION</scope>
    <source>
        <strain>ATCC 204508 / S288c</strain>
    </source>
</reference>
<reference key="4">
    <citation type="journal article" date="2000" name="Nat. Genet.">
        <title>Analysis of yeast protein kinases using protein chips.</title>
        <authorList>
            <person name="Zhu H."/>
            <person name="Klemic J.F."/>
            <person name="Chang S."/>
            <person name="Bertone P."/>
            <person name="Casamayor A."/>
            <person name="Klemic K.G."/>
            <person name="Smith D."/>
            <person name="Gerstein M."/>
            <person name="Reed M.A."/>
            <person name="Snyder M."/>
        </authorList>
    </citation>
    <scope>FUNCTION</scope>
</reference>
<reference key="5">
    <citation type="journal article" date="2001" name="J. Biol. Chem.">
        <title>Identification of novel pheromone-response regulators through systematic overexpression of 120 protein kinases in yeast.</title>
        <authorList>
            <person name="Burchett S.A."/>
            <person name="Scott A."/>
            <person name="Errede B."/>
            <person name="Dohlman H.G."/>
        </authorList>
    </citation>
    <scope>FUNCTION</scope>
</reference>
<reference key="6">
    <citation type="journal article" date="2003" name="Nature">
        <title>Global analysis of protein localization in budding yeast.</title>
        <authorList>
            <person name="Huh W.-K."/>
            <person name="Falvo J.V."/>
            <person name="Gerke L.C."/>
            <person name="Carroll A.S."/>
            <person name="Howson R.W."/>
            <person name="Weissman J.S."/>
            <person name="O'Shea E.K."/>
        </authorList>
    </citation>
    <scope>SUBCELLULAR LOCATION [LARGE SCALE ANALYSIS]</scope>
</reference>
<reference key="7">
    <citation type="journal article" date="2003" name="Nature">
        <title>Global analysis of protein expression in yeast.</title>
        <authorList>
            <person name="Ghaemmaghami S."/>
            <person name="Huh W.-K."/>
            <person name="Bower K."/>
            <person name="Howson R.W."/>
            <person name="Belle A."/>
            <person name="Dephoure N."/>
            <person name="O'Shea E.K."/>
            <person name="Weissman J.S."/>
        </authorList>
    </citation>
    <scope>LEVEL OF PROTEIN EXPRESSION [LARGE SCALE ANALYSIS]</scope>
</reference>
<reference key="8">
    <citation type="journal article" date="2005" name="Nature">
        <title>Global analysis of protein phosphorylation in yeast.</title>
        <authorList>
            <person name="Ptacek J."/>
            <person name="Devgan G."/>
            <person name="Michaud G."/>
            <person name="Zhu H."/>
            <person name="Zhu X."/>
            <person name="Fasolo J."/>
            <person name="Guo H."/>
            <person name="Jona G."/>
            <person name="Breitkreutz A."/>
            <person name="Sopko R."/>
            <person name="McCartney R.R."/>
            <person name="Schmidt M.C."/>
            <person name="Rachidi N."/>
            <person name="Lee S.-J."/>
            <person name="Mah A.S."/>
            <person name="Meng L."/>
            <person name="Stark M.J.R."/>
            <person name="Stern D.F."/>
            <person name="De Virgilio C."/>
            <person name="Tyers M."/>
            <person name="Andrews B."/>
            <person name="Gerstein M."/>
            <person name="Schweitzer B."/>
            <person name="Predki P.F."/>
            <person name="Snyder M."/>
        </authorList>
    </citation>
    <scope>CATALYTIC ACTIVITY</scope>
</reference>
<reference key="9">
    <citation type="journal article" date="2007" name="J. Proteome Res.">
        <title>Large-scale phosphorylation analysis of alpha-factor-arrested Saccharomyces cerevisiae.</title>
        <authorList>
            <person name="Li X."/>
            <person name="Gerber S.A."/>
            <person name="Rudner A.D."/>
            <person name="Beausoleil S.A."/>
            <person name="Haas W."/>
            <person name="Villen J."/>
            <person name="Elias J.E."/>
            <person name="Gygi S.P."/>
        </authorList>
    </citation>
    <scope>PHOSPHORYLATION [LARGE SCALE ANALYSIS] AT SER-132</scope>
    <scope>IDENTIFICATION BY MASS SPECTROMETRY [LARGE SCALE ANALYSIS]</scope>
    <source>
        <strain>ADR376</strain>
    </source>
</reference>
<reference key="10">
    <citation type="journal article" date="2008" name="Mol. Cell. Proteomics">
        <title>A multidimensional chromatography technology for in-depth phosphoproteome analysis.</title>
        <authorList>
            <person name="Albuquerque C.P."/>
            <person name="Smolka M.B."/>
            <person name="Payne S.H."/>
            <person name="Bafna V."/>
            <person name="Eng J."/>
            <person name="Zhou H."/>
        </authorList>
    </citation>
    <scope>PHOSPHORYLATION [LARGE SCALE ANALYSIS] AT SER-132</scope>
    <scope>IDENTIFICATION BY MASS SPECTROMETRY [LARGE SCALE ANALYSIS]</scope>
</reference>
<reference key="11">
    <citation type="journal article" date="2009" name="Science">
        <title>Global analysis of Cdk1 substrate phosphorylation sites provides insights into evolution.</title>
        <authorList>
            <person name="Holt L.J."/>
            <person name="Tuch B.B."/>
            <person name="Villen J."/>
            <person name="Johnson A.D."/>
            <person name="Gygi S.P."/>
            <person name="Morgan D.O."/>
        </authorList>
    </citation>
    <scope>PHOSPHORYLATION [LARGE SCALE ANALYSIS] AT SER-132</scope>
    <scope>IDENTIFICATION BY MASS SPECTROMETRY [LARGE SCALE ANALYSIS]</scope>
</reference>
<reference key="12">
    <citation type="journal article" date="2012" name="Proc. Natl. Acad. Sci. U.S.A.">
        <title>N-terminal acetylome analyses and functional insights of the N-terminal acetyltransferase NatB.</title>
        <authorList>
            <person name="Van Damme P."/>
            <person name="Lasa M."/>
            <person name="Polevoda B."/>
            <person name="Gazquez C."/>
            <person name="Elosegui-Artola A."/>
            <person name="Kim D.S."/>
            <person name="De Juan-Pardo E."/>
            <person name="Demeyer K."/>
            <person name="Hole K."/>
            <person name="Larrea E."/>
            <person name="Timmerman E."/>
            <person name="Prieto J."/>
            <person name="Arnesen T."/>
            <person name="Sherman F."/>
            <person name="Gevaert K."/>
            <person name="Aldabe R."/>
        </authorList>
    </citation>
    <scope>ACETYLATION [LARGE SCALE ANALYSIS] AT MET-1</scope>
    <scope>IDENTIFICATION BY MASS SPECTROMETRY [LARGE SCALE ANALYSIS]</scope>
</reference>